<reference key="1">
    <citation type="journal article" date="1996" name="J. Biol. Chem.">
        <title>Molecular cloning and expression of cDNA encoding rat brain cytosolic acyl-coenzyme A thioester hydrolase.</title>
        <authorList>
            <person name="Broustas C.G."/>
            <person name="Larkins L.K."/>
            <person name="Uhler M.D."/>
            <person name="Hajra A.K."/>
        </authorList>
    </citation>
    <scope>NUCLEOTIDE SEQUENCE [MRNA] (ISOFORM 1)</scope>
    <scope>PROTEIN SEQUENCE OF 306-343</scope>
    <source>
        <tissue>Brain</tissue>
    </source>
</reference>
<reference key="2">
    <citation type="journal article" date="1997" name="Biochem. Biophys. Res. Commun.">
        <title>Molecular cloning and expression of cDNAs encoding rat brain and liver cytosolic long-chain acyl-CoA hydrolases.</title>
        <authorList>
            <person name="Yamada J."/>
            <person name="Furihata T."/>
            <person name="Iida N."/>
            <person name="Watanabe T."/>
            <person name="Hosokawa M."/>
            <person name="Satoh T."/>
            <person name="Someya A."/>
            <person name="Nagaoka I."/>
            <person name="Suga T."/>
        </authorList>
    </citation>
    <scope>NUCLEOTIDE SEQUENCE [MRNA] (ISOFORMS 1 AND 2)</scope>
    <scope>PROTEIN SEQUENCE OF 60-72; 256-264; 315-343 AND 370-380</scope>
    <source>
        <strain>Sprague-Dawley</strain>
        <tissue>Brain</tissue>
        <tissue>Liver</tissue>
    </source>
</reference>
<reference key="3">
    <citation type="submission" date="2005-03" db="EMBL/GenBank/DDBJ databases">
        <authorList>
            <person name="Yamada J."/>
            <person name="Furihata T."/>
            <person name="Iida N."/>
            <person name="Watanabe T."/>
            <person name="Hosokawa M."/>
            <person name="Satoh T."/>
            <person name="Someya A."/>
            <person name="Nagaoka I."/>
            <person name="Suga T."/>
        </authorList>
    </citation>
    <scope>SEQUENCE REVISION TO N-TERMINUS (ISOFORM 2)</scope>
</reference>
<reference key="4">
    <citation type="journal article" date="1997" name="Biochem. J.">
        <title>Peroxisome proliferator-induced acyl-CoA thioesterase from rat liver cytosol: molecular cloning and functional expression in Chinese hamster ovary cells.</title>
        <authorList>
            <person name="Engberg S.T."/>
            <person name="Aoyama T."/>
            <person name="Alexson S.E.H."/>
            <person name="Hashimoto T."/>
            <person name="Svensson L.T."/>
        </authorList>
    </citation>
    <scope>NUCLEOTIDE SEQUENCE [MRNA] (ISOFORM 1)</scope>
    <source>
        <tissue>Liver</tissue>
    </source>
</reference>
<reference key="5">
    <citation type="journal article" date="2004" name="Genome Res.">
        <title>The status, quality, and expansion of the NIH full-length cDNA project: the Mammalian Gene Collection (MGC).</title>
        <authorList>
            <consortium name="The MGC Project Team"/>
        </authorList>
    </citation>
    <scope>NUCLEOTIDE SEQUENCE [LARGE SCALE MRNA] (ISOFORM 1)</scope>
    <source>
        <tissue>Brain</tissue>
    </source>
</reference>
<reference key="6">
    <citation type="submission" date="2006-11" db="UniProtKB">
        <authorList>
            <person name="Lubec G."/>
            <person name="Diao W."/>
            <person name="Afjehi-Sadat L."/>
        </authorList>
    </citation>
    <scope>PROTEIN SEQUENCE OF 135-153 AND 173-184 (ISOFORMS 1/2)</scope>
    <scope>IDENTIFICATION BY MASS SPECTROMETRY</scope>
    <source>
        <strain>Sprague-Dawley</strain>
        <tissue>Hippocampus</tissue>
        <tissue>Spinal cord</tissue>
    </source>
</reference>
<reference key="7">
    <citation type="journal article" date="1994" name="Arch. Biochem. Biophys.">
        <title>Purification and properties of long-chain acyl-CoA hydrolases from the liver cytosol of rats treated with peroxisome proliferator.</title>
        <authorList>
            <person name="Yamada J."/>
            <person name="Matsumoto I."/>
            <person name="Furihata T."/>
            <person name="Sakuma M."/>
            <person name="Suga T."/>
        </authorList>
    </citation>
    <scope>FUNCTION</scope>
    <scope>CATALYTIC ACTIVITY</scope>
    <scope>PATHWAY</scope>
    <scope>BIOPHYSICOCHEMICAL PROPERTIES</scope>
    <scope>SUBCELLULAR LOCATION</scope>
</reference>
<reference key="8">
    <citation type="journal article" date="2012" name="Nat. Commun.">
        <title>Quantitative maps of protein phosphorylation sites across 14 different rat organs and tissues.</title>
        <authorList>
            <person name="Lundby A."/>
            <person name="Secher A."/>
            <person name="Lage K."/>
            <person name="Nordsborg N.B."/>
            <person name="Dmytriyev A."/>
            <person name="Lundby C."/>
            <person name="Olsen J.V."/>
        </authorList>
    </citation>
    <scope>IDENTIFICATION BY MASS SPECTROMETRY [LARGE SCALE ANALYSIS]</scope>
</reference>
<reference key="9">
    <citation type="journal article" date="2002" name="Prog. Lipid Res.">
        <title>The role Acyl-CoA thioesterases play in mediating intracellular lipid metabolism.</title>
        <authorList>
            <person name="Hunt M.C."/>
            <person name="Alexson S.E.H."/>
        </authorList>
    </citation>
    <scope>REVIEW</scope>
</reference>
<protein>
    <recommendedName>
        <fullName>Cytosolic acyl coenzyme A thioester hydrolase</fullName>
        <ecNumber evidence="6">3.1.2.2</ecNumber>
    </recommendedName>
    <alternativeName>
        <fullName>ACH1</fullName>
    </alternativeName>
    <alternativeName>
        <fullName>ACT</fullName>
    </alternativeName>
    <alternativeName>
        <fullName>Acyl-CoA thioesterase 7</fullName>
    </alternativeName>
    <alternativeName>
        <fullName>Brain acyl-CoA hydrolase</fullName>
        <shortName>BACH</shortName>
    </alternativeName>
    <alternativeName>
        <fullName>CTE-IIa</fullName>
    </alternativeName>
    <alternativeName>
        <fullName>CTE-IIb</fullName>
        <shortName>CTE-II</shortName>
    </alternativeName>
    <alternativeName>
        <fullName>LACH1</fullName>
    </alternativeName>
    <alternativeName>
        <fullName>Long chain acyl-CoA thioester hydrolase</fullName>
    </alternativeName>
    <alternativeName>
        <fullName>MTE-II</fullName>
    </alternativeName>
</protein>
<accession>Q64559</accession>
<accession>O08652</accession>
<accession>O09041</accession>
<keyword id="KW-0007">Acetylation</keyword>
<keyword id="KW-0025">Alternative splicing</keyword>
<keyword id="KW-0963">Cytoplasm</keyword>
<keyword id="KW-0903">Direct protein sequencing</keyword>
<keyword id="KW-0276">Fatty acid metabolism</keyword>
<keyword id="KW-0378">Hydrolase</keyword>
<keyword id="KW-0443">Lipid metabolism</keyword>
<keyword id="KW-1185">Reference proteome</keyword>
<keyword id="KW-0677">Repeat</keyword>
<keyword id="KW-0719">Serine esterase</keyword>
<gene>
    <name type="primary">Acot7</name>
    <name type="synonym">Bach</name>
</gene>
<organism>
    <name type="scientific">Rattus norvegicus</name>
    <name type="common">Rat</name>
    <dbReference type="NCBI Taxonomy" id="10116"/>
    <lineage>
        <taxon>Eukaryota</taxon>
        <taxon>Metazoa</taxon>
        <taxon>Chordata</taxon>
        <taxon>Craniata</taxon>
        <taxon>Vertebrata</taxon>
        <taxon>Euteleostomi</taxon>
        <taxon>Mammalia</taxon>
        <taxon>Eutheria</taxon>
        <taxon>Euarchontoglires</taxon>
        <taxon>Glires</taxon>
        <taxon>Rodentia</taxon>
        <taxon>Myomorpha</taxon>
        <taxon>Muroidea</taxon>
        <taxon>Muridae</taxon>
        <taxon>Murinae</taxon>
        <taxon>Rattus</taxon>
    </lineage>
</organism>
<proteinExistence type="evidence at protein level"/>
<name>BACH_RAT</name>
<comment type="function">
    <text evidence="6">Catalyzes the hydrolysis of acyl-CoAs into free fatty acids and coenzyme A (CoASH), regulating their respective intracellular levels (PubMed:7906114). Preferentially hydrolyzes palmitoyl-CoA, but has a broad specificity acting on other fatty acyl-CoAs with chain-lengths of C8-C18 (PubMed:7906114). May play an important physiological function in brain (PubMed:7906114).</text>
</comment>
<comment type="catalytic activity">
    <reaction evidence="6">
        <text>hexadecanoyl-CoA + H2O = hexadecanoate + CoA + H(+)</text>
        <dbReference type="Rhea" id="RHEA:16645"/>
        <dbReference type="ChEBI" id="CHEBI:7896"/>
        <dbReference type="ChEBI" id="CHEBI:15377"/>
        <dbReference type="ChEBI" id="CHEBI:15378"/>
        <dbReference type="ChEBI" id="CHEBI:57287"/>
        <dbReference type="ChEBI" id="CHEBI:57379"/>
        <dbReference type="EC" id="3.1.2.2"/>
    </reaction>
    <physiologicalReaction direction="left-to-right" evidence="12">
        <dbReference type="Rhea" id="RHEA:16646"/>
    </physiologicalReaction>
</comment>
<comment type="catalytic activity">
    <reaction evidence="6">
        <text>dodecanoyl-CoA + H2O = dodecanoate + CoA + H(+)</text>
        <dbReference type="Rhea" id="RHEA:30135"/>
        <dbReference type="ChEBI" id="CHEBI:15377"/>
        <dbReference type="ChEBI" id="CHEBI:15378"/>
        <dbReference type="ChEBI" id="CHEBI:18262"/>
        <dbReference type="ChEBI" id="CHEBI:57287"/>
        <dbReference type="ChEBI" id="CHEBI:57375"/>
    </reaction>
    <physiologicalReaction direction="left-to-right" evidence="12">
        <dbReference type="Rhea" id="RHEA:30136"/>
    </physiologicalReaction>
</comment>
<comment type="catalytic activity">
    <reaction evidence="6">
        <text>tetradecanoyl-CoA + H2O = tetradecanoate + CoA + H(+)</text>
        <dbReference type="Rhea" id="RHEA:40119"/>
        <dbReference type="ChEBI" id="CHEBI:15377"/>
        <dbReference type="ChEBI" id="CHEBI:15378"/>
        <dbReference type="ChEBI" id="CHEBI:30807"/>
        <dbReference type="ChEBI" id="CHEBI:57287"/>
        <dbReference type="ChEBI" id="CHEBI:57385"/>
    </reaction>
    <physiologicalReaction direction="left-to-right" evidence="12">
        <dbReference type="Rhea" id="RHEA:40120"/>
    </physiologicalReaction>
</comment>
<comment type="catalytic activity">
    <reaction evidence="6">
        <text>decanoyl-CoA + H2O = decanoate + CoA + H(+)</text>
        <dbReference type="Rhea" id="RHEA:40059"/>
        <dbReference type="ChEBI" id="CHEBI:15377"/>
        <dbReference type="ChEBI" id="CHEBI:15378"/>
        <dbReference type="ChEBI" id="CHEBI:27689"/>
        <dbReference type="ChEBI" id="CHEBI:57287"/>
        <dbReference type="ChEBI" id="CHEBI:61430"/>
    </reaction>
    <physiologicalReaction direction="left-to-right" evidence="12">
        <dbReference type="Rhea" id="RHEA:40060"/>
    </physiologicalReaction>
</comment>
<comment type="catalytic activity">
    <reaction evidence="6">
        <text>octanoyl-CoA + H2O = octanoate + CoA + H(+)</text>
        <dbReference type="Rhea" id="RHEA:30143"/>
        <dbReference type="ChEBI" id="CHEBI:15377"/>
        <dbReference type="ChEBI" id="CHEBI:15378"/>
        <dbReference type="ChEBI" id="CHEBI:25646"/>
        <dbReference type="ChEBI" id="CHEBI:57287"/>
        <dbReference type="ChEBI" id="CHEBI:57386"/>
    </reaction>
    <physiologicalReaction direction="left-to-right" evidence="12">
        <dbReference type="Rhea" id="RHEA:30144"/>
    </physiologicalReaction>
</comment>
<comment type="catalytic activity">
    <reaction evidence="6">
        <text>octadecanoyl-CoA + H2O = octadecanoate + CoA + H(+)</text>
        <dbReference type="Rhea" id="RHEA:30139"/>
        <dbReference type="ChEBI" id="CHEBI:15377"/>
        <dbReference type="ChEBI" id="CHEBI:15378"/>
        <dbReference type="ChEBI" id="CHEBI:25629"/>
        <dbReference type="ChEBI" id="CHEBI:57287"/>
        <dbReference type="ChEBI" id="CHEBI:57394"/>
    </reaction>
    <physiologicalReaction direction="left-to-right" evidence="12">
        <dbReference type="Rhea" id="RHEA:30140"/>
    </physiologicalReaction>
</comment>
<comment type="catalytic activity">
    <reaction evidence="6">
        <text>(9Z)-octadecenoyl-CoA + H2O = (9Z)-octadecenoate + CoA + H(+)</text>
        <dbReference type="Rhea" id="RHEA:40139"/>
        <dbReference type="ChEBI" id="CHEBI:15377"/>
        <dbReference type="ChEBI" id="CHEBI:15378"/>
        <dbReference type="ChEBI" id="CHEBI:30823"/>
        <dbReference type="ChEBI" id="CHEBI:57287"/>
        <dbReference type="ChEBI" id="CHEBI:57387"/>
    </reaction>
    <physiologicalReaction direction="left-to-right" evidence="12">
        <dbReference type="Rhea" id="RHEA:40140"/>
    </physiologicalReaction>
</comment>
<comment type="biophysicochemical properties">
    <kinetics>
        <KM evidence="6">5.9 uM for palmitoyl-CoA</KM>
        <Vmax evidence="6">553.0 umol/min/mg enzyme with palmitoyl-CoA as substrate</Vmax>
    </kinetics>
</comment>
<comment type="pathway">
    <text evidence="12">Lipid metabolism; fatty acid metabolism.</text>
</comment>
<comment type="subunit">
    <text evidence="3">Homohexamer.</text>
</comment>
<comment type="subcellular location">
    <subcellularLocation>
        <location evidence="6">Cytoplasm</location>
        <location evidence="6">Cytosol</location>
    </subcellularLocation>
</comment>
<comment type="alternative products">
    <event type="alternative splicing"/>
    <isoform>
        <id>Q64559-2</id>
        <name>2</name>
        <name>LACH1</name>
        <name>MTE-II</name>
        <sequence type="displayed"/>
    </isoform>
    <isoform>
        <id>Q64559-1</id>
        <name>1</name>
        <name>BACH</name>
        <name>CTE-IIa</name>
        <name>CTE-II</name>
        <sequence type="described" ref="VSP_016956"/>
    </isoform>
</comment>
<comment type="tissue specificity">
    <text>Isoform 1 is expressed constitutively in brain and testis. Isoform 2 is induced in liver by treatment with the peroxisome proliferator.</text>
</comment>
<comment type="domain">
    <text evidence="1">Both HotDog ACOT-type hydrolase domains are required for efficient activity.</text>
</comment>
<comment type="PTM">
    <text>The N-terminus is blocked.</text>
</comment>
<comment type="caution">
    <text evidence="11">These proteins have been named according to their molecular weight (see PubMed:11755680): BACH (also called CTE-IIa and CTE-II), LACH1 (also called MTE-II) and ACT (also called CTE-IIb). It is unknown whether ACT corresponds to another isoform.</text>
</comment>
<evidence type="ECO:0000250" key="1"/>
<evidence type="ECO:0000250" key="2">
    <source>
        <dbReference type="UniProtKB" id="O00154"/>
    </source>
</evidence>
<evidence type="ECO:0000250" key="3">
    <source>
        <dbReference type="UniProtKB" id="Q91V12"/>
    </source>
</evidence>
<evidence type="ECO:0000255" key="4">
    <source>
        <dbReference type="PROSITE-ProRule" id="PRU01106"/>
    </source>
</evidence>
<evidence type="ECO:0000256" key="5">
    <source>
        <dbReference type="SAM" id="MobiDB-lite"/>
    </source>
</evidence>
<evidence type="ECO:0000269" key="6">
    <source>
    </source>
</evidence>
<evidence type="ECO:0000303" key="7">
    <source>
    </source>
</evidence>
<evidence type="ECO:0000303" key="8">
    <source>
    </source>
</evidence>
<evidence type="ECO:0000303" key="9">
    <source>
    </source>
</evidence>
<evidence type="ECO:0000303" key="10">
    <source>
    </source>
</evidence>
<evidence type="ECO:0000305" key="11"/>
<evidence type="ECO:0000305" key="12">
    <source>
    </source>
</evidence>
<dbReference type="EC" id="3.1.2.2" evidence="6"/>
<dbReference type="EMBL" id="U49694">
    <property type="protein sequence ID" value="AAC53202.1"/>
    <property type="molecule type" value="mRNA"/>
</dbReference>
<dbReference type="EMBL" id="D88890">
    <property type="protein sequence ID" value="BAA19626.1"/>
    <property type="molecule type" value="mRNA"/>
</dbReference>
<dbReference type="EMBL" id="D88891">
    <property type="protein sequence ID" value="BAA19627.2"/>
    <property type="molecule type" value="mRNA"/>
</dbReference>
<dbReference type="EMBL" id="Y09332">
    <property type="protein sequence ID" value="CAA70512.1"/>
    <property type="molecule type" value="mRNA"/>
</dbReference>
<dbReference type="EMBL" id="BC087716">
    <property type="protein sequence ID" value="AAH87716.1"/>
    <property type="molecule type" value="mRNA"/>
</dbReference>
<dbReference type="PIR" id="JC5415">
    <property type="entry name" value="JC5415"/>
</dbReference>
<dbReference type="PIR" id="JC5416">
    <property type="entry name" value="JC5416"/>
</dbReference>
<dbReference type="RefSeq" id="NP_001139533.1">
    <molecule id="Q64559-2"/>
    <property type="nucleotide sequence ID" value="NM_001146061.2"/>
</dbReference>
<dbReference type="RefSeq" id="NP_037346.2">
    <property type="nucleotide sequence ID" value="NM_013214.4"/>
</dbReference>
<dbReference type="SMR" id="Q64559"/>
<dbReference type="FunCoup" id="Q64559">
    <property type="interactions" value="738"/>
</dbReference>
<dbReference type="STRING" id="10116.ENSRNOP00000014213"/>
<dbReference type="SwissLipids" id="SLP:000000586"/>
<dbReference type="SwissLipids" id="SLP:000000614">
    <molecule id="Q64559-1"/>
</dbReference>
<dbReference type="GlyGen" id="Q64559">
    <property type="glycosylation" value="1 site, 1 O-linked glycan (1 site)"/>
</dbReference>
<dbReference type="iPTMnet" id="Q64559"/>
<dbReference type="PhosphoSitePlus" id="Q64559"/>
<dbReference type="jPOST" id="Q64559"/>
<dbReference type="PaxDb" id="10116-ENSRNOP00000014213"/>
<dbReference type="GeneID" id="26759"/>
<dbReference type="KEGG" id="rno:26759"/>
<dbReference type="UCSC" id="RGD:628856">
    <molecule id="Q64559-2"/>
    <property type="organism name" value="rat"/>
</dbReference>
<dbReference type="AGR" id="RGD:628856"/>
<dbReference type="CTD" id="11332"/>
<dbReference type="RGD" id="628856">
    <property type="gene designation" value="Acot7"/>
</dbReference>
<dbReference type="VEuPathDB" id="HostDB:ENSRNOG00000010580"/>
<dbReference type="eggNOG" id="KOG2763">
    <property type="taxonomic scope" value="Eukaryota"/>
</dbReference>
<dbReference type="InParanoid" id="Q64559"/>
<dbReference type="OrthoDB" id="46327at9989"/>
<dbReference type="PhylomeDB" id="Q64559"/>
<dbReference type="TreeFam" id="TF329579"/>
<dbReference type="BRENDA" id="3.1.2.2">
    <property type="organism ID" value="5301"/>
</dbReference>
<dbReference type="BRENDA" id="3.1.2.20">
    <property type="organism ID" value="5301"/>
</dbReference>
<dbReference type="Reactome" id="R-RNO-77289">
    <property type="pathway name" value="Mitochondrial Fatty Acid Beta-Oxidation"/>
</dbReference>
<dbReference type="SABIO-RK" id="Q64559"/>
<dbReference type="UniPathway" id="UPA00199"/>
<dbReference type="PRO" id="PR:Q64559"/>
<dbReference type="Proteomes" id="UP000002494">
    <property type="component" value="Chromosome 5"/>
</dbReference>
<dbReference type="Bgee" id="ENSRNOG00000010580">
    <property type="expression patterns" value="Expressed in testis and 19 other cell types or tissues"/>
</dbReference>
<dbReference type="ExpressionAtlas" id="Q64559">
    <property type="expression patterns" value="baseline and differential"/>
</dbReference>
<dbReference type="GO" id="GO:0005737">
    <property type="term" value="C:cytoplasm"/>
    <property type="evidence" value="ECO:0000266"/>
    <property type="project" value="RGD"/>
</dbReference>
<dbReference type="GO" id="GO:0005829">
    <property type="term" value="C:cytosol"/>
    <property type="evidence" value="ECO:0000266"/>
    <property type="project" value="RGD"/>
</dbReference>
<dbReference type="GO" id="GO:0005759">
    <property type="term" value="C:mitochondrial matrix"/>
    <property type="evidence" value="ECO:0000266"/>
    <property type="project" value="RGD"/>
</dbReference>
<dbReference type="GO" id="GO:0043005">
    <property type="term" value="C:neuron projection"/>
    <property type="evidence" value="ECO:0000266"/>
    <property type="project" value="RGD"/>
</dbReference>
<dbReference type="GO" id="GO:0043025">
    <property type="term" value="C:neuronal cell body"/>
    <property type="evidence" value="ECO:0000266"/>
    <property type="project" value="RGD"/>
</dbReference>
<dbReference type="GO" id="GO:0052689">
    <property type="term" value="F:carboxylic ester hydrolase activity"/>
    <property type="evidence" value="ECO:0007669"/>
    <property type="project" value="UniProtKB-KW"/>
</dbReference>
<dbReference type="GO" id="GO:0047617">
    <property type="term" value="F:fatty acyl-CoA hydrolase activity"/>
    <property type="evidence" value="ECO:0000314"/>
    <property type="project" value="RGD"/>
</dbReference>
<dbReference type="GO" id="GO:0000062">
    <property type="term" value="F:fatty-acyl-CoA binding"/>
    <property type="evidence" value="ECO:0000266"/>
    <property type="project" value="RGD"/>
</dbReference>
<dbReference type="GO" id="GO:0036042">
    <property type="term" value="F:long-chain fatty acyl-CoA binding"/>
    <property type="evidence" value="ECO:0000266"/>
    <property type="project" value="RGD"/>
</dbReference>
<dbReference type="GO" id="GO:0052816">
    <property type="term" value="F:long-chain fatty acyl-CoA hydrolase activity"/>
    <property type="evidence" value="ECO:0000266"/>
    <property type="project" value="RGD"/>
</dbReference>
<dbReference type="GO" id="GO:0042803">
    <property type="term" value="F:protein homodimerization activity"/>
    <property type="evidence" value="ECO:0000266"/>
    <property type="project" value="RGD"/>
</dbReference>
<dbReference type="GO" id="GO:0006637">
    <property type="term" value="P:acyl-CoA metabolic process"/>
    <property type="evidence" value="ECO:0000318"/>
    <property type="project" value="GO_Central"/>
</dbReference>
<dbReference type="GO" id="GO:0015937">
    <property type="term" value="P:coenzyme A biosynthetic process"/>
    <property type="evidence" value="ECO:0000266"/>
    <property type="project" value="RGD"/>
</dbReference>
<dbReference type="GO" id="GO:0009062">
    <property type="term" value="P:fatty acid catabolic process"/>
    <property type="evidence" value="ECO:0000266"/>
    <property type="project" value="RGD"/>
</dbReference>
<dbReference type="GO" id="GO:0036116">
    <property type="term" value="P:long-chain fatty-acyl-CoA catabolic process"/>
    <property type="evidence" value="ECO:0000266"/>
    <property type="project" value="RGD"/>
</dbReference>
<dbReference type="GO" id="GO:0051792">
    <property type="term" value="P:medium-chain fatty acid biosynthetic process"/>
    <property type="evidence" value="ECO:0000266"/>
    <property type="project" value="RGD"/>
</dbReference>
<dbReference type="GO" id="GO:0036114">
    <property type="term" value="P:medium-chain fatty-acyl-CoA catabolic process"/>
    <property type="evidence" value="ECO:0000266"/>
    <property type="project" value="RGD"/>
</dbReference>
<dbReference type="GO" id="GO:1900535">
    <property type="term" value="P:palmitic acid biosynthetic process"/>
    <property type="evidence" value="ECO:0000266"/>
    <property type="project" value="RGD"/>
</dbReference>
<dbReference type="CDD" id="cd03442">
    <property type="entry name" value="BFIT_BACH"/>
    <property type="match status" value="2"/>
</dbReference>
<dbReference type="FunFam" id="3.10.129.10:FF:000009">
    <property type="entry name" value="Cytosolic acyl coenzyme A thioester hydrolase"/>
    <property type="match status" value="1"/>
</dbReference>
<dbReference type="FunFam" id="3.10.129.10:FF:000010">
    <property type="entry name" value="Cytosolic acyl coenzyme A thioester hydrolase"/>
    <property type="match status" value="1"/>
</dbReference>
<dbReference type="Gene3D" id="3.10.129.10">
    <property type="entry name" value="Hotdog Thioesterase"/>
    <property type="match status" value="2"/>
</dbReference>
<dbReference type="InterPro" id="IPR040170">
    <property type="entry name" value="Cytosol_ACT"/>
</dbReference>
<dbReference type="InterPro" id="IPR033120">
    <property type="entry name" value="HOTDOG_ACOT"/>
</dbReference>
<dbReference type="InterPro" id="IPR029069">
    <property type="entry name" value="HotDog_dom_sf"/>
</dbReference>
<dbReference type="InterPro" id="IPR006683">
    <property type="entry name" value="Thioestr_dom"/>
</dbReference>
<dbReference type="PANTHER" id="PTHR11049">
    <property type="entry name" value="ACYL COENZYME A THIOESTER HYDROLASE"/>
    <property type="match status" value="1"/>
</dbReference>
<dbReference type="PANTHER" id="PTHR11049:SF24">
    <property type="entry name" value="CYTOSOLIC ACYL COENZYME A THIOESTER HYDROLASE"/>
    <property type="match status" value="1"/>
</dbReference>
<dbReference type="Pfam" id="PF03061">
    <property type="entry name" value="4HBT"/>
    <property type="match status" value="2"/>
</dbReference>
<dbReference type="SUPFAM" id="SSF54637">
    <property type="entry name" value="Thioesterase/thiol ester dehydrase-isomerase"/>
    <property type="match status" value="2"/>
</dbReference>
<dbReference type="PROSITE" id="PS51770">
    <property type="entry name" value="HOTDOG_ACOT"/>
    <property type="match status" value="2"/>
</dbReference>
<sequence>MKLLARTLYLWEVGRQVASWSLTSGQECLVLRETWWASMRAVRTRAVHHKPGHCIAMGRIMRPDDANVAGNVHGGTILKMIEEAGVIISTRHCNSQNGERCVAALARVERTDFLSPMCIGEVAHVSAEITYTSKHSVEVQVHVLSENILTGTKKLTNKATLWYVPLSLKNVDKVLEVPPIVYLRQEQEEEGRKRYEAQKLERMETKWRNGDIVQPILNPEPNTVSYSQSSLIHLVGPSDCTLHGFVHGGVTMKLMDEVAGIVAARHCKTNIVTASVDAINFHDKIRKGCVITISGRMTFTSNKSMEIEVLVDADPVVDNSQKRYRAASAFFTYVSLNQEGKPLPVPQLVPETEDEKKRFEEGKGRYLQMKAKRQGHTEPQP</sequence>
<feature type="chain" id="PRO_0000053808" description="Cytosolic acyl coenzyme A thioester hydrolase">
    <location>
        <begin position="1"/>
        <end position="381"/>
    </location>
</feature>
<feature type="domain" description="HotDog ACOT-type 1" evidence="4">
    <location>
        <begin position="51"/>
        <end position="169"/>
    </location>
</feature>
<feature type="domain" description="HotDog ACOT-type 2" evidence="4">
    <location>
        <begin position="225"/>
        <end position="339"/>
    </location>
</feature>
<feature type="region of interest" description="Disordered" evidence="5">
    <location>
        <begin position="343"/>
        <end position="381"/>
    </location>
</feature>
<feature type="compositionally biased region" description="Basic and acidic residues" evidence="5">
    <location>
        <begin position="354"/>
        <end position="364"/>
    </location>
</feature>
<feature type="active site" evidence="1">
    <location>
        <position position="67"/>
    </location>
</feature>
<feature type="active site" evidence="1">
    <location>
        <position position="256"/>
    </location>
</feature>
<feature type="modified residue" description="N6-acetyllysine" evidence="2">
    <location>
        <position position="169"/>
    </location>
</feature>
<feature type="modified residue" description="N6-acetyllysine" evidence="2">
    <location>
        <position position="199"/>
    </location>
</feature>
<feature type="modified residue" description="N6-acetyllysine" evidence="2">
    <location>
        <position position="284"/>
    </location>
</feature>
<feature type="splice variant" id="VSP_016956" description="In isoform 1." evidence="7 8 9 10">
    <original>MKLLARTLYLWEVGRQVASWSLTSGQECLVLRETWWASMRAVRTRAVHHKPGHCIAMG</original>
    <variation>MSGPTTDTPAAIQIC</variation>
    <location>
        <begin position="1"/>
        <end position="58"/>
    </location>
</feature>
<feature type="sequence conflict" description="In Ref. 1; AAC53202." evidence="11" ref="1">
    <original>V</original>
    <variation>A</variation>
    <location>
        <position position="86"/>
    </location>
</feature>
<feature type="sequence conflict" description="In Ref. 1; AAC53202." evidence="11" ref="1">
    <original>S</original>
    <variation>R</variation>
    <location>
        <position position="89"/>
    </location>
</feature>
<feature type="sequence conflict" description="In Ref. 1; AAC53202." evidence="11" ref="1">
    <original>L</original>
    <variation>M</variation>
    <location>
        <position position="144"/>
    </location>
</feature>
<feature type="sequence conflict" description="In Ref. 2; BAA19627." evidence="11" ref="2">
    <original>V</original>
    <variation>A</variation>
    <location>
        <position position="171"/>
    </location>
</feature>
<feature type="sequence conflict" description="In Ref. 1; AAC53202." evidence="11" ref="1">
    <original>I</original>
    <variation>V</variation>
    <location>
        <position position="216"/>
    </location>
</feature>
<feature type="sequence conflict" description="In Ref. 2; BAA19627." evidence="11" ref="2">
    <original>I</original>
    <variation>V</variation>
    <location>
        <position position="279"/>
    </location>
</feature>
<feature type="sequence conflict" description="In Ref. 1; AAC53202." evidence="11" ref="1">
    <original>L</original>
    <variation>M</variation>
    <location>
        <position position="343"/>
    </location>
</feature>
<feature type="sequence conflict" description="In Ref. 1; AAC53202." evidence="11" ref="1">
    <original>K</original>
    <variation>N</variation>
    <location>
        <position position="372"/>
    </location>
</feature>